<accession>C0R594</accession>
<sequence length="182" mass="20437">MHLIVGLGNPGSQYELTHHNIGFITVDAICKYWGFQLFSKKADYLITSGMINDNKIMLIKPYSFMNNSGIPVAKIRNFYKLSLDNIVVIHDDADLELGRIKVKKGGSSAGHNGLKSIDSFIGNDYWRLRFGVGRPEDQRSLADYVLSKFSNFDNVTPLVEKIAKNIHLMLQGDNTAFINLIV</sequence>
<name>PTH_WOLWR</name>
<protein>
    <recommendedName>
        <fullName evidence="1">Peptidyl-tRNA hydrolase</fullName>
        <shortName evidence="1">Pth</shortName>
        <ecNumber evidence="1">3.1.1.29</ecNumber>
    </recommendedName>
</protein>
<keyword id="KW-0963">Cytoplasm</keyword>
<keyword id="KW-0378">Hydrolase</keyword>
<keyword id="KW-0694">RNA-binding</keyword>
<keyword id="KW-0820">tRNA-binding</keyword>
<feature type="chain" id="PRO_1000118419" description="Peptidyl-tRNA hydrolase">
    <location>
        <begin position="1"/>
        <end position="182"/>
    </location>
</feature>
<feature type="active site" description="Proton acceptor" evidence="1">
    <location>
        <position position="19"/>
    </location>
</feature>
<feature type="binding site" evidence="1">
    <location>
        <position position="14"/>
    </location>
    <ligand>
        <name>tRNA</name>
        <dbReference type="ChEBI" id="CHEBI:17843"/>
    </ligand>
</feature>
<feature type="binding site" evidence="1">
    <location>
        <position position="64"/>
    </location>
    <ligand>
        <name>tRNA</name>
        <dbReference type="ChEBI" id="CHEBI:17843"/>
    </ligand>
</feature>
<feature type="binding site" evidence="1">
    <location>
        <position position="66"/>
    </location>
    <ligand>
        <name>tRNA</name>
        <dbReference type="ChEBI" id="CHEBI:17843"/>
    </ligand>
</feature>
<feature type="binding site" evidence="1">
    <location>
        <position position="112"/>
    </location>
    <ligand>
        <name>tRNA</name>
        <dbReference type="ChEBI" id="CHEBI:17843"/>
    </ligand>
</feature>
<feature type="site" description="Discriminates between blocked and unblocked aminoacyl-tRNA" evidence="1">
    <location>
        <position position="9"/>
    </location>
</feature>
<feature type="site" description="Stabilizes the basic form of H active site to accept a proton" evidence="1">
    <location>
        <position position="91"/>
    </location>
</feature>
<dbReference type="EC" id="3.1.1.29" evidence="1"/>
<dbReference type="EMBL" id="CP001391">
    <property type="protein sequence ID" value="ACN94936.1"/>
    <property type="molecule type" value="Genomic_DNA"/>
</dbReference>
<dbReference type="RefSeq" id="WP_006280288.1">
    <property type="nucleotide sequence ID" value="NZ_MKIF01000024.1"/>
</dbReference>
<dbReference type="SMR" id="C0R594"/>
<dbReference type="STRING" id="66084.WRi_000810"/>
<dbReference type="KEGG" id="wri:WRi_000810"/>
<dbReference type="HOGENOM" id="CLU_062456_1_0_5"/>
<dbReference type="Proteomes" id="UP000001293">
    <property type="component" value="Chromosome"/>
</dbReference>
<dbReference type="GO" id="GO:0005737">
    <property type="term" value="C:cytoplasm"/>
    <property type="evidence" value="ECO:0007669"/>
    <property type="project" value="UniProtKB-SubCell"/>
</dbReference>
<dbReference type="GO" id="GO:0004045">
    <property type="term" value="F:peptidyl-tRNA hydrolase activity"/>
    <property type="evidence" value="ECO:0007669"/>
    <property type="project" value="UniProtKB-UniRule"/>
</dbReference>
<dbReference type="GO" id="GO:0000049">
    <property type="term" value="F:tRNA binding"/>
    <property type="evidence" value="ECO:0007669"/>
    <property type="project" value="UniProtKB-UniRule"/>
</dbReference>
<dbReference type="GO" id="GO:0006515">
    <property type="term" value="P:protein quality control for misfolded or incompletely synthesized proteins"/>
    <property type="evidence" value="ECO:0007669"/>
    <property type="project" value="UniProtKB-UniRule"/>
</dbReference>
<dbReference type="GO" id="GO:0072344">
    <property type="term" value="P:rescue of stalled ribosome"/>
    <property type="evidence" value="ECO:0007669"/>
    <property type="project" value="UniProtKB-UniRule"/>
</dbReference>
<dbReference type="CDD" id="cd00462">
    <property type="entry name" value="PTH"/>
    <property type="match status" value="1"/>
</dbReference>
<dbReference type="FunFam" id="3.40.50.1470:FF:000001">
    <property type="entry name" value="Peptidyl-tRNA hydrolase"/>
    <property type="match status" value="1"/>
</dbReference>
<dbReference type="Gene3D" id="3.40.50.1470">
    <property type="entry name" value="Peptidyl-tRNA hydrolase"/>
    <property type="match status" value="1"/>
</dbReference>
<dbReference type="HAMAP" id="MF_00083">
    <property type="entry name" value="Pept_tRNA_hydro_bact"/>
    <property type="match status" value="1"/>
</dbReference>
<dbReference type="InterPro" id="IPR001328">
    <property type="entry name" value="Pept_tRNA_hydro"/>
</dbReference>
<dbReference type="InterPro" id="IPR018171">
    <property type="entry name" value="Pept_tRNA_hydro_CS"/>
</dbReference>
<dbReference type="InterPro" id="IPR036416">
    <property type="entry name" value="Pept_tRNA_hydro_sf"/>
</dbReference>
<dbReference type="NCBIfam" id="TIGR00447">
    <property type="entry name" value="pth"/>
    <property type="match status" value="1"/>
</dbReference>
<dbReference type="PANTHER" id="PTHR17224">
    <property type="entry name" value="PEPTIDYL-TRNA HYDROLASE"/>
    <property type="match status" value="1"/>
</dbReference>
<dbReference type="PANTHER" id="PTHR17224:SF1">
    <property type="entry name" value="PEPTIDYL-TRNA HYDROLASE"/>
    <property type="match status" value="1"/>
</dbReference>
<dbReference type="Pfam" id="PF01195">
    <property type="entry name" value="Pept_tRNA_hydro"/>
    <property type="match status" value="1"/>
</dbReference>
<dbReference type="SUPFAM" id="SSF53178">
    <property type="entry name" value="Peptidyl-tRNA hydrolase-like"/>
    <property type="match status" value="1"/>
</dbReference>
<dbReference type="PROSITE" id="PS01196">
    <property type="entry name" value="PEPT_TRNA_HYDROL_2"/>
    <property type="match status" value="1"/>
</dbReference>
<reference key="1">
    <citation type="journal article" date="2009" name="Proc. Natl. Acad. Sci. U.S.A.">
        <title>The mosaic genome structure of the Wolbachia wRi strain infecting Drosophila simulans.</title>
        <authorList>
            <person name="Klasson L."/>
            <person name="Westberg J."/>
            <person name="Sapountzis P."/>
            <person name="Naeslund K."/>
            <person name="Lutnaes Y."/>
            <person name="Darby A.C."/>
            <person name="Veneti Z."/>
            <person name="Chen L."/>
            <person name="Braig H.R."/>
            <person name="Garrett R."/>
            <person name="Bourtzis K."/>
            <person name="Andersson S.G."/>
        </authorList>
    </citation>
    <scope>NUCLEOTIDE SEQUENCE [LARGE SCALE GENOMIC DNA]</scope>
    <source>
        <strain>wRi</strain>
    </source>
</reference>
<proteinExistence type="inferred from homology"/>
<gene>
    <name evidence="1" type="primary">pth</name>
    <name type="ordered locus">WRi_000810</name>
</gene>
<comment type="function">
    <text evidence="1">Hydrolyzes ribosome-free peptidyl-tRNAs (with 1 or more amino acids incorporated), which drop off the ribosome during protein synthesis, or as a result of ribosome stalling.</text>
</comment>
<comment type="function">
    <text evidence="1">Catalyzes the release of premature peptidyl moieties from peptidyl-tRNA molecules trapped in stalled 50S ribosomal subunits, and thus maintains levels of free tRNAs and 50S ribosomes.</text>
</comment>
<comment type="catalytic activity">
    <reaction evidence="1">
        <text>an N-acyl-L-alpha-aminoacyl-tRNA + H2O = an N-acyl-L-amino acid + a tRNA + H(+)</text>
        <dbReference type="Rhea" id="RHEA:54448"/>
        <dbReference type="Rhea" id="RHEA-COMP:10123"/>
        <dbReference type="Rhea" id="RHEA-COMP:13883"/>
        <dbReference type="ChEBI" id="CHEBI:15377"/>
        <dbReference type="ChEBI" id="CHEBI:15378"/>
        <dbReference type="ChEBI" id="CHEBI:59874"/>
        <dbReference type="ChEBI" id="CHEBI:78442"/>
        <dbReference type="ChEBI" id="CHEBI:138191"/>
        <dbReference type="EC" id="3.1.1.29"/>
    </reaction>
</comment>
<comment type="subunit">
    <text evidence="1">Monomer.</text>
</comment>
<comment type="subcellular location">
    <subcellularLocation>
        <location evidence="1">Cytoplasm</location>
    </subcellularLocation>
</comment>
<comment type="similarity">
    <text evidence="1">Belongs to the PTH family.</text>
</comment>
<evidence type="ECO:0000255" key="1">
    <source>
        <dbReference type="HAMAP-Rule" id="MF_00083"/>
    </source>
</evidence>
<organism>
    <name type="scientific">Wolbachia sp. subsp. Drosophila simulans (strain wRi)</name>
    <dbReference type="NCBI Taxonomy" id="66084"/>
    <lineage>
        <taxon>Bacteria</taxon>
        <taxon>Pseudomonadati</taxon>
        <taxon>Pseudomonadota</taxon>
        <taxon>Alphaproteobacteria</taxon>
        <taxon>Rickettsiales</taxon>
        <taxon>Anaplasmataceae</taxon>
        <taxon>Wolbachieae</taxon>
        <taxon>Wolbachia</taxon>
    </lineage>
</organism>